<name>FLGI_METFK</name>
<gene>
    <name evidence="1" type="primary">flgI</name>
    <name type="ordered locus">Mfla_1961</name>
</gene>
<organism>
    <name type="scientific">Methylobacillus flagellatus (strain ATCC 51484 / DSM 6875 / VKM B-1610 / KT)</name>
    <dbReference type="NCBI Taxonomy" id="265072"/>
    <lineage>
        <taxon>Bacteria</taxon>
        <taxon>Pseudomonadati</taxon>
        <taxon>Pseudomonadota</taxon>
        <taxon>Betaproteobacteria</taxon>
        <taxon>Nitrosomonadales</taxon>
        <taxon>Methylophilaceae</taxon>
        <taxon>Methylobacillus</taxon>
    </lineage>
</organism>
<sequence>MTLTRPLALISALAALILALPADAERIKDLTTIQGVRSNQLIGYGLVVGLDGTGDQTTQTPFTVQSIVSMMQQMGINLPSGTNLQLRNVAAVMVTGNLPPFAQPGQPMDVTVSSMGNARSLRGGTLLMTPLKGADNQVYAMAQGNLVIGGAGAGASGTSTQINHLGAGRISAGAIVERAVPSQLTETSTIRLELKEADFSTASMVVDAINKRFGNGTATPLDGRVIQVQPPMDINRIAFIGNLENLDVKPSQGPAKVILNARTGSVVMNQAVTLDDCAISHGNLSVVINTAPAISQPGPFSGGQTVATQVSQVEINKEPGQVIKLDKGTSLADVVKALNAIGATPQDLVAILQAMKAAGSLRADLEII</sequence>
<protein>
    <recommendedName>
        <fullName evidence="1">Flagellar P-ring protein</fullName>
    </recommendedName>
    <alternativeName>
        <fullName evidence="1">Basal body P-ring protein</fullName>
    </alternativeName>
</protein>
<proteinExistence type="inferred from homology"/>
<evidence type="ECO:0000255" key="1">
    <source>
        <dbReference type="HAMAP-Rule" id="MF_00416"/>
    </source>
</evidence>
<keyword id="KW-0975">Bacterial flagellum</keyword>
<keyword id="KW-0574">Periplasm</keyword>
<keyword id="KW-1185">Reference proteome</keyword>
<keyword id="KW-0732">Signal</keyword>
<reference key="1">
    <citation type="submission" date="2006-03" db="EMBL/GenBank/DDBJ databases">
        <title>Complete sequence of Methylobacillus flagellatus KT.</title>
        <authorList>
            <consortium name="US DOE Joint Genome Institute"/>
            <person name="Copeland A."/>
            <person name="Lucas S."/>
            <person name="Lapidus A."/>
            <person name="Barry K."/>
            <person name="Detter J.C."/>
            <person name="Glavina del Rio T."/>
            <person name="Hammon N."/>
            <person name="Israni S."/>
            <person name="Dalin E."/>
            <person name="Tice H."/>
            <person name="Pitluck S."/>
            <person name="Brettin T."/>
            <person name="Bruce D."/>
            <person name="Han C."/>
            <person name="Tapia R."/>
            <person name="Saunders E."/>
            <person name="Gilna P."/>
            <person name="Schmutz J."/>
            <person name="Larimer F."/>
            <person name="Land M."/>
            <person name="Kyrpides N."/>
            <person name="Anderson I."/>
            <person name="Richardson P."/>
        </authorList>
    </citation>
    <scope>NUCLEOTIDE SEQUENCE [LARGE SCALE GENOMIC DNA]</scope>
    <source>
        <strain>ATCC 51484 / DSM 6875 / VKM B-1610 / KT</strain>
    </source>
</reference>
<dbReference type="EMBL" id="CP000284">
    <property type="protein sequence ID" value="ABE50228.1"/>
    <property type="molecule type" value="Genomic_DNA"/>
</dbReference>
<dbReference type="RefSeq" id="WP_011480182.1">
    <property type="nucleotide sequence ID" value="NC_007947.1"/>
</dbReference>
<dbReference type="SMR" id="Q1GZV9"/>
<dbReference type="STRING" id="265072.Mfla_1961"/>
<dbReference type="KEGG" id="mfa:Mfla_1961"/>
<dbReference type="eggNOG" id="COG1706">
    <property type="taxonomic scope" value="Bacteria"/>
</dbReference>
<dbReference type="HOGENOM" id="CLU_045235_1_0_4"/>
<dbReference type="OrthoDB" id="9786431at2"/>
<dbReference type="Proteomes" id="UP000002440">
    <property type="component" value="Chromosome"/>
</dbReference>
<dbReference type="GO" id="GO:0009428">
    <property type="term" value="C:bacterial-type flagellum basal body, distal rod, P ring"/>
    <property type="evidence" value="ECO:0007669"/>
    <property type="project" value="InterPro"/>
</dbReference>
<dbReference type="GO" id="GO:0030288">
    <property type="term" value="C:outer membrane-bounded periplasmic space"/>
    <property type="evidence" value="ECO:0007669"/>
    <property type="project" value="InterPro"/>
</dbReference>
<dbReference type="GO" id="GO:0005198">
    <property type="term" value="F:structural molecule activity"/>
    <property type="evidence" value="ECO:0007669"/>
    <property type="project" value="InterPro"/>
</dbReference>
<dbReference type="GO" id="GO:0071973">
    <property type="term" value="P:bacterial-type flagellum-dependent cell motility"/>
    <property type="evidence" value="ECO:0007669"/>
    <property type="project" value="InterPro"/>
</dbReference>
<dbReference type="HAMAP" id="MF_00416">
    <property type="entry name" value="FlgI"/>
    <property type="match status" value="1"/>
</dbReference>
<dbReference type="InterPro" id="IPR001782">
    <property type="entry name" value="Flag_FlgI"/>
</dbReference>
<dbReference type="NCBIfam" id="NF003676">
    <property type="entry name" value="PRK05303.1"/>
    <property type="match status" value="1"/>
</dbReference>
<dbReference type="PANTHER" id="PTHR30381">
    <property type="entry name" value="FLAGELLAR P-RING PERIPLASMIC PROTEIN FLGI"/>
    <property type="match status" value="1"/>
</dbReference>
<dbReference type="PANTHER" id="PTHR30381:SF0">
    <property type="entry name" value="FLAGELLAR P-RING PROTEIN"/>
    <property type="match status" value="1"/>
</dbReference>
<dbReference type="Pfam" id="PF02119">
    <property type="entry name" value="FlgI"/>
    <property type="match status" value="1"/>
</dbReference>
<dbReference type="PRINTS" id="PR01010">
    <property type="entry name" value="FLGPRINGFLGI"/>
</dbReference>
<comment type="function">
    <text evidence="1">Assembles around the rod to form the L-ring and probably protects the motor/basal body from shearing forces during rotation.</text>
</comment>
<comment type="subunit">
    <text evidence="1">The basal body constitutes a major portion of the flagellar organelle and consists of four rings (L,P,S, and M) mounted on a central rod.</text>
</comment>
<comment type="subcellular location">
    <subcellularLocation>
        <location evidence="1">Periplasm</location>
    </subcellularLocation>
    <subcellularLocation>
        <location evidence="1">Bacterial flagellum basal body</location>
    </subcellularLocation>
</comment>
<comment type="similarity">
    <text evidence="1">Belongs to the FlgI family.</text>
</comment>
<accession>Q1GZV9</accession>
<feature type="signal peptide" evidence="1">
    <location>
        <begin position="1"/>
        <end position="24"/>
    </location>
</feature>
<feature type="chain" id="PRO_1000060077" description="Flagellar P-ring protein">
    <location>
        <begin position="25"/>
        <end position="368"/>
    </location>
</feature>